<gene>
    <name evidence="1" type="primary">hfq</name>
    <name type="ordered locus">HS_1105</name>
</gene>
<feature type="chain" id="PRO_0000265161" description="RNA-binding protein Hfq">
    <location>
        <begin position="1"/>
        <end position="96"/>
    </location>
</feature>
<feature type="domain" description="Sm" evidence="2">
    <location>
        <begin position="9"/>
        <end position="68"/>
    </location>
</feature>
<evidence type="ECO:0000255" key="1">
    <source>
        <dbReference type="HAMAP-Rule" id="MF_00436"/>
    </source>
</evidence>
<evidence type="ECO:0000255" key="2">
    <source>
        <dbReference type="PROSITE-ProRule" id="PRU01346"/>
    </source>
</evidence>
<proteinExistence type="inferred from homology"/>
<keyword id="KW-0694">RNA-binding</keyword>
<keyword id="KW-0346">Stress response</keyword>
<sequence length="96" mass="10945">MAKGQSLQDPYLNALRRERIPVSIYLVNGIKLQGQIESFDQFVILLKNTVNQMVYKHAISTVVPARSVSHHNSVQHHHIVQTQEMQVEALAENQTE</sequence>
<comment type="function">
    <text evidence="1">RNA chaperone that binds small regulatory RNA (sRNAs) and mRNAs to facilitate mRNA translational regulation in response to envelope stress, environmental stress and changes in metabolite concentrations. Also binds with high specificity to tRNAs.</text>
</comment>
<comment type="subunit">
    <text evidence="1">Homohexamer.</text>
</comment>
<comment type="similarity">
    <text evidence="1">Belongs to the Hfq family.</text>
</comment>
<organism>
    <name type="scientific">Histophilus somni (strain 129Pt)</name>
    <name type="common">Haemophilus somnus</name>
    <dbReference type="NCBI Taxonomy" id="205914"/>
    <lineage>
        <taxon>Bacteria</taxon>
        <taxon>Pseudomonadati</taxon>
        <taxon>Pseudomonadota</taxon>
        <taxon>Gammaproteobacteria</taxon>
        <taxon>Pasteurellales</taxon>
        <taxon>Pasteurellaceae</taxon>
        <taxon>Histophilus</taxon>
    </lineage>
</organism>
<protein>
    <recommendedName>
        <fullName evidence="1">RNA-binding protein Hfq</fullName>
    </recommendedName>
</protein>
<accession>Q0I441</accession>
<name>HFQ_HISS1</name>
<dbReference type="EMBL" id="CP000436">
    <property type="protein sequence ID" value="ABI25380.1"/>
    <property type="molecule type" value="Genomic_DNA"/>
</dbReference>
<dbReference type="SMR" id="Q0I441"/>
<dbReference type="KEGG" id="hso:HS_1105"/>
<dbReference type="eggNOG" id="COG1923">
    <property type="taxonomic scope" value="Bacteria"/>
</dbReference>
<dbReference type="HOGENOM" id="CLU_113688_2_2_6"/>
<dbReference type="GO" id="GO:0005829">
    <property type="term" value="C:cytosol"/>
    <property type="evidence" value="ECO:0007669"/>
    <property type="project" value="TreeGrafter"/>
</dbReference>
<dbReference type="GO" id="GO:0003723">
    <property type="term" value="F:RNA binding"/>
    <property type="evidence" value="ECO:0007669"/>
    <property type="project" value="UniProtKB-UniRule"/>
</dbReference>
<dbReference type="GO" id="GO:0006355">
    <property type="term" value="P:regulation of DNA-templated transcription"/>
    <property type="evidence" value="ECO:0007669"/>
    <property type="project" value="InterPro"/>
</dbReference>
<dbReference type="GO" id="GO:0043487">
    <property type="term" value="P:regulation of RNA stability"/>
    <property type="evidence" value="ECO:0007669"/>
    <property type="project" value="TreeGrafter"/>
</dbReference>
<dbReference type="GO" id="GO:0045974">
    <property type="term" value="P:regulation of translation, ncRNA-mediated"/>
    <property type="evidence" value="ECO:0007669"/>
    <property type="project" value="TreeGrafter"/>
</dbReference>
<dbReference type="CDD" id="cd01716">
    <property type="entry name" value="Hfq"/>
    <property type="match status" value="1"/>
</dbReference>
<dbReference type="FunFam" id="2.30.30.100:FF:000001">
    <property type="entry name" value="RNA-binding protein Hfq"/>
    <property type="match status" value="1"/>
</dbReference>
<dbReference type="Gene3D" id="2.30.30.100">
    <property type="match status" value="1"/>
</dbReference>
<dbReference type="HAMAP" id="MF_00436">
    <property type="entry name" value="Hfq"/>
    <property type="match status" value="1"/>
</dbReference>
<dbReference type="InterPro" id="IPR005001">
    <property type="entry name" value="Hfq"/>
</dbReference>
<dbReference type="InterPro" id="IPR010920">
    <property type="entry name" value="LSM_dom_sf"/>
</dbReference>
<dbReference type="InterPro" id="IPR047575">
    <property type="entry name" value="Sm"/>
</dbReference>
<dbReference type="NCBIfam" id="TIGR02383">
    <property type="entry name" value="Hfq"/>
    <property type="match status" value="1"/>
</dbReference>
<dbReference type="NCBIfam" id="NF001602">
    <property type="entry name" value="PRK00395.1"/>
    <property type="match status" value="1"/>
</dbReference>
<dbReference type="PANTHER" id="PTHR34772">
    <property type="entry name" value="RNA-BINDING PROTEIN HFQ"/>
    <property type="match status" value="1"/>
</dbReference>
<dbReference type="PANTHER" id="PTHR34772:SF1">
    <property type="entry name" value="RNA-BINDING PROTEIN HFQ"/>
    <property type="match status" value="1"/>
</dbReference>
<dbReference type="Pfam" id="PF17209">
    <property type="entry name" value="Hfq"/>
    <property type="match status" value="1"/>
</dbReference>
<dbReference type="SUPFAM" id="SSF50182">
    <property type="entry name" value="Sm-like ribonucleoproteins"/>
    <property type="match status" value="1"/>
</dbReference>
<dbReference type="PROSITE" id="PS52002">
    <property type="entry name" value="SM"/>
    <property type="match status" value="1"/>
</dbReference>
<reference key="1">
    <citation type="journal article" date="2007" name="J. Bacteriol.">
        <title>Complete genome sequence of Haemophilus somnus (Histophilus somni) strain 129Pt and comparison to Haemophilus ducreyi 35000HP and Haemophilus influenzae Rd.</title>
        <authorList>
            <person name="Challacombe J.F."/>
            <person name="Duncan A.J."/>
            <person name="Brettin T.S."/>
            <person name="Bruce D."/>
            <person name="Chertkov O."/>
            <person name="Detter J.C."/>
            <person name="Han C.S."/>
            <person name="Misra M."/>
            <person name="Richardson P."/>
            <person name="Tapia R."/>
            <person name="Thayer N."/>
            <person name="Xie G."/>
            <person name="Inzana T.J."/>
        </authorList>
    </citation>
    <scope>NUCLEOTIDE SEQUENCE [LARGE SCALE GENOMIC DNA]</scope>
    <source>
        <strain>129Pt</strain>
    </source>
</reference>